<sequence length="389" mass="42971">METMCEVKVITGTSAAAEAAKLADVDVIAAYPITPQTTCVEKLAEFVANGELDAEYIKVESEHSAMSACIGAAATGARTFTATASQGLALMHEMLFIASGMRLPIVMMVANRALSAPINIWNDHQDSIAERDSGWIQIYVEDNQETLDSIIQAYKIAENEDVLLPVMVCLDGFILTHTVEPVTIPKAERVREFLGVYEPKHAYLDPDRPITQGPVGVPDCYMETRKQIEEAMERAKKVIRDVNEEFAEWFKRKYGNGLVEAYNLDNADTVLVAMGSVCGTIKYVIDELKKEGKNVGLLRIRAFRPFPKEDVKELLKDANNIAVLDKNISLGFNKGALGIEMASILKNKKVCNYIVGLGGRDIKIDDIKTIINHVEKAEDDSTLWVGLKE</sequence>
<dbReference type="EC" id="1.2.7.1"/>
<dbReference type="EMBL" id="L77117">
    <property type="protein sequence ID" value="AAB98254.1"/>
    <property type="molecule type" value="Genomic_DNA"/>
</dbReference>
<dbReference type="PIR" id="D64333">
    <property type="entry name" value="D64333"/>
</dbReference>
<dbReference type="SMR" id="Q57715"/>
<dbReference type="FunCoup" id="Q57715">
    <property type="interactions" value="94"/>
</dbReference>
<dbReference type="STRING" id="243232.MJ_0267"/>
<dbReference type="PaxDb" id="243232-MJ_0267"/>
<dbReference type="EnsemblBacteria" id="AAB98254">
    <property type="protein sequence ID" value="AAB98254"/>
    <property type="gene ID" value="MJ_0267"/>
</dbReference>
<dbReference type="KEGG" id="mja:MJ_0267"/>
<dbReference type="eggNOG" id="arCOG01608">
    <property type="taxonomic scope" value="Archaea"/>
</dbReference>
<dbReference type="HOGENOM" id="CLU_002569_5_0_2"/>
<dbReference type="InParanoid" id="Q57715"/>
<dbReference type="PhylomeDB" id="Q57715"/>
<dbReference type="Proteomes" id="UP000000805">
    <property type="component" value="Chromosome"/>
</dbReference>
<dbReference type="GO" id="GO:0019164">
    <property type="term" value="F:pyruvate synthase activity"/>
    <property type="evidence" value="ECO:0007669"/>
    <property type="project" value="UniProtKB-EC"/>
</dbReference>
<dbReference type="GO" id="GO:0006979">
    <property type="term" value="P:response to oxidative stress"/>
    <property type="evidence" value="ECO:0000318"/>
    <property type="project" value="GO_Central"/>
</dbReference>
<dbReference type="CDD" id="cd07034">
    <property type="entry name" value="TPP_PYR_PFOR_IOR-alpha_like"/>
    <property type="match status" value="1"/>
</dbReference>
<dbReference type="FunFam" id="3.40.50.920:FF:000010">
    <property type="entry name" value="Pyruvate ferredoxin oxidoreductase, alpha subunit"/>
    <property type="match status" value="1"/>
</dbReference>
<dbReference type="FunFam" id="3.40.50.970:FF:000012">
    <property type="entry name" value="Pyruvate:ferredoxin (Flavodoxin) oxidoreductase"/>
    <property type="match status" value="1"/>
</dbReference>
<dbReference type="Gene3D" id="3.40.50.920">
    <property type="match status" value="1"/>
</dbReference>
<dbReference type="Gene3D" id="3.40.50.970">
    <property type="match status" value="1"/>
</dbReference>
<dbReference type="InterPro" id="IPR033412">
    <property type="entry name" value="PFOR_II"/>
</dbReference>
<dbReference type="InterPro" id="IPR050722">
    <property type="entry name" value="Pyruvate:ferred/Flavod_OxRd"/>
</dbReference>
<dbReference type="InterPro" id="IPR053390">
    <property type="entry name" value="Pyruvate_synthase_PorA"/>
</dbReference>
<dbReference type="InterPro" id="IPR002880">
    <property type="entry name" value="Pyrv_Fd/Flavodoxin_OxRdtase_N"/>
</dbReference>
<dbReference type="InterPro" id="IPR029061">
    <property type="entry name" value="THDP-binding"/>
</dbReference>
<dbReference type="InterPro" id="IPR009014">
    <property type="entry name" value="Transketo_C/PFOR_II"/>
</dbReference>
<dbReference type="NCBIfam" id="NF040682">
    <property type="entry name" value="PorA_Arch"/>
    <property type="match status" value="1"/>
</dbReference>
<dbReference type="PANTHER" id="PTHR32154">
    <property type="entry name" value="PYRUVATE-FLAVODOXIN OXIDOREDUCTASE-RELATED"/>
    <property type="match status" value="1"/>
</dbReference>
<dbReference type="PANTHER" id="PTHR32154:SF0">
    <property type="entry name" value="PYRUVATE-FLAVODOXIN OXIDOREDUCTASE-RELATED"/>
    <property type="match status" value="1"/>
</dbReference>
<dbReference type="Pfam" id="PF17147">
    <property type="entry name" value="PFOR_II"/>
    <property type="match status" value="1"/>
</dbReference>
<dbReference type="Pfam" id="PF01855">
    <property type="entry name" value="POR_N"/>
    <property type="match status" value="1"/>
</dbReference>
<dbReference type="SUPFAM" id="SSF52518">
    <property type="entry name" value="Thiamin diphosphate-binding fold (THDP-binding)"/>
    <property type="match status" value="1"/>
</dbReference>
<dbReference type="SUPFAM" id="SSF52922">
    <property type="entry name" value="TK C-terminal domain-like"/>
    <property type="match status" value="1"/>
</dbReference>
<comment type="catalytic activity">
    <reaction>
        <text>2 oxidized [2Fe-2S]-[ferredoxin] + pyruvate + CoA = 2 reduced [2Fe-2S]-[ferredoxin] + acetyl-CoA + CO2 + H(+)</text>
        <dbReference type="Rhea" id="RHEA:12765"/>
        <dbReference type="Rhea" id="RHEA-COMP:10000"/>
        <dbReference type="Rhea" id="RHEA-COMP:10001"/>
        <dbReference type="ChEBI" id="CHEBI:15361"/>
        <dbReference type="ChEBI" id="CHEBI:15378"/>
        <dbReference type="ChEBI" id="CHEBI:16526"/>
        <dbReference type="ChEBI" id="CHEBI:33737"/>
        <dbReference type="ChEBI" id="CHEBI:33738"/>
        <dbReference type="ChEBI" id="CHEBI:57287"/>
        <dbReference type="ChEBI" id="CHEBI:57288"/>
        <dbReference type="EC" id="1.2.7.1"/>
    </reaction>
</comment>
<comment type="subunit">
    <text evidence="1">Heterotetramer of one alpha, one beta, one delta and one gamma chain.</text>
</comment>
<organism>
    <name type="scientific">Methanocaldococcus jannaschii (strain ATCC 43067 / DSM 2661 / JAL-1 / JCM 10045 / NBRC 100440)</name>
    <name type="common">Methanococcus jannaschii</name>
    <dbReference type="NCBI Taxonomy" id="243232"/>
    <lineage>
        <taxon>Archaea</taxon>
        <taxon>Methanobacteriati</taxon>
        <taxon>Methanobacteriota</taxon>
        <taxon>Methanomada group</taxon>
        <taxon>Methanococci</taxon>
        <taxon>Methanococcales</taxon>
        <taxon>Methanocaldococcaceae</taxon>
        <taxon>Methanocaldococcus</taxon>
    </lineage>
</organism>
<accession>Q57715</accession>
<gene>
    <name type="primary">porA</name>
    <name type="ordered locus">MJ0267</name>
</gene>
<keyword id="KW-0560">Oxidoreductase</keyword>
<keyword id="KW-1185">Reference proteome</keyword>
<reference key="1">
    <citation type="journal article" date="1996" name="Science">
        <title>Complete genome sequence of the methanogenic archaeon, Methanococcus jannaschii.</title>
        <authorList>
            <person name="Bult C.J."/>
            <person name="White O."/>
            <person name="Olsen G.J."/>
            <person name="Zhou L."/>
            <person name="Fleischmann R.D."/>
            <person name="Sutton G.G."/>
            <person name="Blake J.A."/>
            <person name="FitzGerald L.M."/>
            <person name="Clayton R.A."/>
            <person name="Gocayne J.D."/>
            <person name="Kerlavage A.R."/>
            <person name="Dougherty B.A."/>
            <person name="Tomb J.-F."/>
            <person name="Adams M.D."/>
            <person name="Reich C.I."/>
            <person name="Overbeek R."/>
            <person name="Kirkness E.F."/>
            <person name="Weinstock K.G."/>
            <person name="Merrick J.M."/>
            <person name="Glodek A."/>
            <person name="Scott J.L."/>
            <person name="Geoghagen N.S.M."/>
            <person name="Weidman J.F."/>
            <person name="Fuhrmann J.L."/>
            <person name="Nguyen D."/>
            <person name="Utterback T.R."/>
            <person name="Kelley J.M."/>
            <person name="Peterson J.D."/>
            <person name="Sadow P.W."/>
            <person name="Hanna M.C."/>
            <person name="Cotton M.D."/>
            <person name="Roberts K.M."/>
            <person name="Hurst M.A."/>
            <person name="Kaine B.P."/>
            <person name="Borodovsky M."/>
            <person name="Klenk H.-P."/>
            <person name="Fraser C.M."/>
            <person name="Smith H.O."/>
            <person name="Woese C.R."/>
            <person name="Venter J.C."/>
        </authorList>
    </citation>
    <scope>NUCLEOTIDE SEQUENCE [LARGE SCALE GENOMIC DNA]</scope>
    <source>
        <strain>ATCC 43067 / DSM 2661 / JAL-1 / JCM 10045 / NBRC 100440</strain>
    </source>
</reference>
<feature type="chain" id="PRO_0000099896" description="Pyruvate synthase subunit PorA">
    <location>
        <begin position="1"/>
        <end position="389"/>
    </location>
</feature>
<protein>
    <recommendedName>
        <fullName>Pyruvate synthase subunit PorA</fullName>
        <ecNumber>1.2.7.1</ecNumber>
    </recommendedName>
    <alternativeName>
        <fullName>Pyruvate oxidoreductase alpha chain</fullName>
        <shortName>POR</shortName>
    </alternativeName>
    <alternativeName>
        <fullName>Pyruvic-ferredoxin oxidoreductase subunit alpha</fullName>
    </alternativeName>
</protein>
<proteinExistence type="inferred from homology"/>
<evidence type="ECO:0000250" key="1"/>
<name>PORA_METJA</name>